<organism>
    <name type="scientific">Gallus gallus</name>
    <name type="common">Chicken</name>
    <dbReference type="NCBI Taxonomy" id="9031"/>
    <lineage>
        <taxon>Eukaryota</taxon>
        <taxon>Metazoa</taxon>
        <taxon>Chordata</taxon>
        <taxon>Craniata</taxon>
        <taxon>Vertebrata</taxon>
        <taxon>Euteleostomi</taxon>
        <taxon>Archelosauria</taxon>
        <taxon>Archosauria</taxon>
        <taxon>Dinosauria</taxon>
        <taxon>Saurischia</taxon>
        <taxon>Theropoda</taxon>
        <taxon>Coelurosauria</taxon>
        <taxon>Aves</taxon>
        <taxon>Neognathae</taxon>
        <taxon>Galloanserae</taxon>
        <taxon>Galliformes</taxon>
        <taxon>Phasianidae</taxon>
        <taxon>Phasianinae</taxon>
        <taxon>Gallus</taxon>
    </lineage>
</organism>
<proteinExistence type="evidence at transcript level"/>
<name>EPHA5_CHICK</name>
<protein>
    <recommendedName>
        <fullName>Ephrin type-A receptor 5</fullName>
        <ecNumber>2.7.10.1</ecNumber>
    </recommendedName>
    <alternativeName>
        <fullName>EPH-like kinase 7</fullName>
        <shortName>EK7</shortName>
        <shortName>cEK7</shortName>
    </alternativeName>
</protein>
<gene>
    <name type="primary">EPHA5</name>
    <name type="synonym">CEK7</name>
</gene>
<feature type="signal peptide" evidence="4">
    <location>
        <begin position="1"/>
        <end position="31"/>
    </location>
</feature>
<feature type="chain" id="PRO_0000016815" description="Ephrin type-A receptor 5">
    <location>
        <begin position="32"/>
        <end position="1013"/>
    </location>
</feature>
<feature type="topological domain" description="Extracellular" evidence="4">
    <location>
        <begin position="32"/>
        <end position="549"/>
    </location>
</feature>
<feature type="transmembrane region" description="Helical" evidence="4">
    <location>
        <begin position="550"/>
        <end position="570"/>
    </location>
</feature>
<feature type="topological domain" description="Cytoplasmic" evidence="4">
    <location>
        <begin position="571"/>
        <end position="1013"/>
    </location>
</feature>
<feature type="domain" description="Eph LBD" evidence="8">
    <location>
        <begin position="36"/>
        <end position="214"/>
    </location>
</feature>
<feature type="domain" description="Fibronectin type-III 1" evidence="7">
    <location>
        <begin position="333"/>
        <end position="443"/>
    </location>
</feature>
<feature type="domain" description="Fibronectin type-III 2" evidence="7">
    <location>
        <begin position="444"/>
        <end position="538"/>
    </location>
</feature>
<feature type="domain" description="Protein kinase" evidence="5">
    <location>
        <begin position="651"/>
        <end position="912"/>
    </location>
</feature>
<feature type="domain" description="SAM" evidence="6">
    <location>
        <begin position="941"/>
        <end position="1013"/>
    </location>
</feature>
<feature type="short sequence motif" description="PDZ-binding" evidence="4">
    <location>
        <begin position="1011"/>
        <end position="1013"/>
    </location>
</feature>
<feature type="active site" description="Proton acceptor" evidence="5 9">
    <location>
        <position position="776"/>
    </location>
</feature>
<feature type="binding site" evidence="5">
    <location>
        <begin position="657"/>
        <end position="665"/>
    </location>
    <ligand>
        <name>ATP</name>
        <dbReference type="ChEBI" id="CHEBI:30616"/>
    </ligand>
</feature>
<feature type="binding site" evidence="5">
    <location>
        <position position="683"/>
    </location>
    <ligand>
        <name>ATP</name>
        <dbReference type="ChEBI" id="CHEBI:30616"/>
    </ligand>
</feature>
<feature type="modified residue" description="Phosphotyrosine; by autocatalysis" evidence="1">
    <location>
        <position position="626"/>
    </location>
</feature>
<feature type="modified residue" description="Phosphotyrosine; by autocatalysis" evidence="1">
    <location>
        <position position="632"/>
    </location>
</feature>
<feature type="modified residue" description="Phosphotyrosine; by autocatalysis" evidence="4">
    <location>
        <position position="809"/>
    </location>
</feature>
<feature type="modified residue" description="Phosphotyrosine; by autocatalysis" evidence="1">
    <location>
        <position position="958"/>
    </location>
</feature>
<feature type="glycosylation site" description="N-linked (GlcNAc...) asparagine" evidence="4">
    <location>
        <position position="240"/>
    </location>
</feature>
<feature type="glycosylation site" description="N-linked (GlcNAc...) asparagine" evidence="4">
    <location>
        <position position="275"/>
    </location>
</feature>
<feature type="glycosylation site" description="N-linked (GlcNAc...) asparagine" evidence="4">
    <location>
        <position position="345"/>
    </location>
</feature>
<feature type="glycosylation site" description="N-linked (GlcNAc...) asparagine" evidence="4">
    <location>
        <position position="399"/>
    </location>
</feature>
<feature type="glycosylation site" description="N-linked (GlcNAc...) asparagine" evidence="4">
    <location>
        <position position="412"/>
    </location>
</feature>
<feature type="glycosylation site" description="N-linked (GlcNAc...) asparagine" evidence="4">
    <location>
        <position position="437"/>
    </location>
</feature>
<feature type="splice variant" id="VSP_003004" description="In isoform 2." evidence="10">
    <location>
        <begin position="280"/>
        <end position="443"/>
    </location>
</feature>
<feature type="splice variant" id="VSP_003005" description="In isoform 1 and isoform 2." evidence="10">
    <original>SCCDHGCGWASSLRAVAYPSLIW</original>
    <variation>R</variation>
    <location>
        <begin position="573"/>
        <end position="595"/>
    </location>
</feature>
<feature type="sequence conflict" description="In Ref. 2; CAA79508." evidence="10" ref="2">
    <original>LRRLGVTLVGHQKKIMNSLQEMKVQLVNGMVPL</original>
    <variation>ESPCEKWSLTLHPLFPTGYQT</variation>
    <location>
        <begin position="981"/>
        <end position="1013"/>
    </location>
</feature>
<dbReference type="EC" id="2.7.10.1"/>
<dbReference type="EMBL" id="U03910">
    <property type="protein sequence ID" value="AAB60613.1"/>
    <property type="molecule type" value="mRNA"/>
</dbReference>
<dbReference type="EMBL" id="U03910">
    <property type="protein sequence ID" value="AAB60614.1"/>
    <property type="molecule type" value="mRNA"/>
</dbReference>
<dbReference type="EMBL" id="U03910">
    <property type="protein sequence ID" value="AAB60612.1"/>
    <property type="molecule type" value="mRNA"/>
</dbReference>
<dbReference type="EMBL" id="Z19058">
    <property type="protein sequence ID" value="CAA79508.1"/>
    <property type="molecule type" value="mRNA"/>
</dbReference>
<dbReference type="PIR" id="I50615">
    <property type="entry name" value="I50615"/>
</dbReference>
<dbReference type="SMR" id="P54755"/>
<dbReference type="FunCoup" id="P54755">
    <property type="interactions" value="467"/>
</dbReference>
<dbReference type="STRING" id="9031.ENSGALP00000019068"/>
<dbReference type="GlyCosmos" id="P54755">
    <property type="glycosylation" value="6 sites, No reported glycans"/>
</dbReference>
<dbReference type="GlyGen" id="P54755">
    <property type="glycosylation" value="7 sites"/>
</dbReference>
<dbReference type="PaxDb" id="9031-ENSGALP00000037020"/>
<dbReference type="VEuPathDB" id="HostDB:geneid_395997"/>
<dbReference type="eggNOG" id="KOG0196">
    <property type="taxonomic scope" value="Eukaryota"/>
</dbReference>
<dbReference type="InParanoid" id="P54755"/>
<dbReference type="OrthoDB" id="4062651at2759"/>
<dbReference type="PhylomeDB" id="P54755"/>
<dbReference type="BRENDA" id="2.7.10.1">
    <property type="organism ID" value="1306"/>
</dbReference>
<dbReference type="Proteomes" id="UP000000539">
    <property type="component" value="Unassembled WGS sequence"/>
</dbReference>
<dbReference type="GO" id="GO:0030424">
    <property type="term" value="C:axon"/>
    <property type="evidence" value="ECO:0000250"/>
    <property type="project" value="UniProtKB"/>
</dbReference>
<dbReference type="GO" id="GO:0030425">
    <property type="term" value="C:dendrite"/>
    <property type="evidence" value="ECO:0000250"/>
    <property type="project" value="UniProtKB"/>
</dbReference>
<dbReference type="GO" id="GO:0005886">
    <property type="term" value="C:plasma membrane"/>
    <property type="evidence" value="ECO:0000250"/>
    <property type="project" value="UniProtKB"/>
</dbReference>
<dbReference type="GO" id="GO:0005524">
    <property type="term" value="F:ATP binding"/>
    <property type="evidence" value="ECO:0007669"/>
    <property type="project" value="UniProtKB-KW"/>
</dbReference>
<dbReference type="GO" id="GO:0005004">
    <property type="term" value="F:GPI-linked ephrin receptor activity"/>
    <property type="evidence" value="ECO:0000250"/>
    <property type="project" value="UniProtKB"/>
</dbReference>
<dbReference type="GO" id="GO:0005005">
    <property type="term" value="F:transmembrane-ephrin receptor activity"/>
    <property type="evidence" value="ECO:0000318"/>
    <property type="project" value="GO_Central"/>
</dbReference>
<dbReference type="GO" id="GO:0007411">
    <property type="term" value="P:axon guidance"/>
    <property type="evidence" value="ECO:0000250"/>
    <property type="project" value="UniProtKB"/>
</dbReference>
<dbReference type="GO" id="GO:0048013">
    <property type="term" value="P:ephrin receptor signaling pathway"/>
    <property type="evidence" value="ECO:0000250"/>
    <property type="project" value="UniProtKB"/>
</dbReference>
<dbReference type="GO" id="GO:0021766">
    <property type="term" value="P:hippocampus development"/>
    <property type="evidence" value="ECO:0000250"/>
    <property type="project" value="UniProtKB"/>
</dbReference>
<dbReference type="GO" id="GO:0032956">
    <property type="term" value="P:regulation of actin cytoskeleton organization"/>
    <property type="evidence" value="ECO:0000250"/>
    <property type="project" value="UniProtKB"/>
</dbReference>
<dbReference type="GO" id="GO:0043087">
    <property type="term" value="P:regulation of GTPase activity"/>
    <property type="evidence" value="ECO:0000250"/>
    <property type="project" value="UniProtKB"/>
</dbReference>
<dbReference type="CDD" id="cd00063">
    <property type="entry name" value="FN3"/>
    <property type="match status" value="2"/>
</dbReference>
<dbReference type="CDD" id="cd05066">
    <property type="entry name" value="PTKc_EphR_A"/>
    <property type="match status" value="1"/>
</dbReference>
<dbReference type="CDD" id="cd09546">
    <property type="entry name" value="SAM_EPH-A5"/>
    <property type="match status" value="1"/>
</dbReference>
<dbReference type="FunFam" id="2.60.40.10:FF:000041">
    <property type="entry name" value="ephrin type-A receptor 3"/>
    <property type="match status" value="1"/>
</dbReference>
<dbReference type="FunFam" id="1.10.150.50:FF:000001">
    <property type="entry name" value="Ephrin type-A receptor 5"/>
    <property type="match status" value="1"/>
</dbReference>
<dbReference type="FunFam" id="1.10.510.10:FF:000019">
    <property type="entry name" value="Ephrin type-A receptor 5"/>
    <property type="match status" value="1"/>
</dbReference>
<dbReference type="FunFam" id="2.10.50.10:FF:000001">
    <property type="entry name" value="Ephrin type-A receptor 5"/>
    <property type="match status" value="1"/>
</dbReference>
<dbReference type="FunFam" id="2.60.40.10:FF:000045">
    <property type="entry name" value="Ephrin type-A receptor 5"/>
    <property type="match status" value="1"/>
</dbReference>
<dbReference type="FunFam" id="2.60.40.1770:FF:000001">
    <property type="entry name" value="Ephrin type-A receptor 5"/>
    <property type="match status" value="1"/>
</dbReference>
<dbReference type="FunFam" id="3.30.200.20:FF:000001">
    <property type="entry name" value="Ephrin type-A receptor 5"/>
    <property type="match status" value="1"/>
</dbReference>
<dbReference type="FunFam" id="2.60.120.260:FF:000001">
    <property type="entry name" value="Ephrin type-A receptor 7"/>
    <property type="match status" value="1"/>
</dbReference>
<dbReference type="Gene3D" id="2.60.40.1770">
    <property type="entry name" value="ephrin a2 ectodomain"/>
    <property type="match status" value="1"/>
</dbReference>
<dbReference type="Gene3D" id="2.60.120.260">
    <property type="entry name" value="Galactose-binding domain-like"/>
    <property type="match status" value="1"/>
</dbReference>
<dbReference type="Gene3D" id="2.60.40.10">
    <property type="entry name" value="Immunoglobulins"/>
    <property type="match status" value="2"/>
</dbReference>
<dbReference type="Gene3D" id="3.30.200.20">
    <property type="entry name" value="Phosphorylase Kinase, domain 1"/>
    <property type="match status" value="1"/>
</dbReference>
<dbReference type="Gene3D" id="1.10.150.50">
    <property type="entry name" value="Transcription Factor, Ets-1"/>
    <property type="match status" value="1"/>
</dbReference>
<dbReference type="Gene3D" id="1.10.510.10">
    <property type="entry name" value="Transferase(Phosphotransferase) domain 1"/>
    <property type="match status" value="1"/>
</dbReference>
<dbReference type="Gene3D" id="2.10.50.10">
    <property type="entry name" value="Tumor Necrosis Factor Receptor, subunit A, domain 2"/>
    <property type="match status" value="1"/>
</dbReference>
<dbReference type="InterPro" id="IPR027936">
    <property type="entry name" value="Eph_TM"/>
</dbReference>
<dbReference type="InterPro" id="IPR001090">
    <property type="entry name" value="Ephrin_rcpt_lig-bd_dom"/>
</dbReference>
<dbReference type="InterPro" id="IPR050449">
    <property type="entry name" value="Ephrin_rcpt_TKs"/>
</dbReference>
<dbReference type="InterPro" id="IPR003961">
    <property type="entry name" value="FN3_dom"/>
</dbReference>
<dbReference type="InterPro" id="IPR036116">
    <property type="entry name" value="FN3_sf"/>
</dbReference>
<dbReference type="InterPro" id="IPR008979">
    <property type="entry name" value="Galactose-bd-like_sf"/>
</dbReference>
<dbReference type="InterPro" id="IPR009030">
    <property type="entry name" value="Growth_fac_rcpt_cys_sf"/>
</dbReference>
<dbReference type="InterPro" id="IPR013783">
    <property type="entry name" value="Ig-like_fold"/>
</dbReference>
<dbReference type="InterPro" id="IPR011009">
    <property type="entry name" value="Kinase-like_dom_sf"/>
</dbReference>
<dbReference type="InterPro" id="IPR000719">
    <property type="entry name" value="Prot_kinase_dom"/>
</dbReference>
<dbReference type="InterPro" id="IPR017441">
    <property type="entry name" value="Protein_kinase_ATP_BS"/>
</dbReference>
<dbReference type="InterPro" id="IPR001660">
    <property type="entry name" value="SAM"/>
</dbReference>
<dbReference type="InterPro" id="IPR013761">
    <property type="entry name" value="SAM/pointed_sf"/>
</dbReference>
<dbReference type="InterPro" id="IPR001245">
    <property type="entry name" value="Ser-Thr/Tyr_kinase_cat_dom"/>
</dbReference>
<dbReference type="InterPro" id="IPR008266">
    <property type="entry name" value="Tyr_kinase_AS"/>
</dbReference>
<dbReference type="InterPro" id="IPR020635">
    <property type="entry name" value="Tyr_kinase_cat_dom"/>
</dbReference>
<dbReference type="InterPro" id="IPR016257">
    <property type="entry name" value="Tyr_kinase_ephrin_rcpt"/>
</dbReference>
<dbReference type="InterPro" id="IPR001426">
    <property type="entry name" value="Tyr_kinase_rcpt_V_CS"/>
</dbReference>
<dbReference type="PANTHER" id="PTHR46877">
    <property type="entry name" value="EPH RECEPTOR A5"/>
    <property type="match status" value="1"/>
</dbReference>
<dbReference type="PANTHER" id="PTHR46877:SF13">
    <property type="entry name" value="EPHRIN TYPE-A RECEPTOR 5"/>
    <property type="match status" value="1"/>
</dbReference>
<dbReference type="Pfam" id="PF14575">
    <property type="entry name" value="EphA2_TM"/>
    <property type="match status" value="1"/>
</dbReference>
<dbReference type="Pfam" id="PF01404">
    <property type="entry name" value="Ephrin_lbd"/>
    <property type="match status" value="1"/>
</dbReference>
<dbReference type="Pfam" id="PF00041">
    <property type="entry name" value="fn3"/>
    <property type="match status" value="2"/>
</dbReference>
<dbReference type="Pfam" id="PF07714">
    <property type="entry name" value="PK_Tyr_Ser-Thr"/>
    <property type="match status" value="1"/>
</dbReference>
<dbReference type="Pfam" id="PF00536">
    <property type="entry name" value="SAM_1"/>
    <property type="match status" value="1"/>
</dbReference>
<dbReference type="PIRSF" id="PIRSF000666">
    <property type="entry name" value="TyrPK_ephrin_receptor"/>
    <property type="match status" value="1"/>
</dbReference>
<dbReference type="PRINTS" id="PR00014">
    <property type="entry name" value="FNTYPEIII"/>
</dbReference>
<dbReference type="PRINTS" id="PR00109">
    <property type="entry name" value="TYRKINASE"/>
</dbReference>
<dbReference type="SMART" id="SM00615">
    <property type="entry name" value="EPH_lbd"/>
    <property type="match status" value="1"/>
</dbReference>
<dbReference type="SMART" id="SM01411">
    <property type="entry name" value="Ephrin_rec_like"/>
    <property type="match status" value="1"/>
</dbReference>
<dbReference type="SMART" id="SM00060">
    <property type="entry name" value="FN3"/>
    <property type="match status" value="2"/>
</dbReference>
<dbReference type="SMART" id="SM00454">
    <property type="entry name" value="SAM"/>
    <property type="match status" value="1"/>
</dbReference>
<dbReference type="SMART" id="SM00219">
    <property type="entry name" value="TyrKc"/>
    <property type="match status" value="1"/>
</dbReference>
<dbReference type="SUPFAM" id="SSF49265">
    <property type="entry name" value="Fibronectin type III"/>
    <property type="match status" value="1"/>
</dbReference>
<dbReference type="SUPFAM" id="SSF49785">
    <property type="entry name" value="Galactose-binding domain-like"/>
    <property type="match status" value="1"/>
</dbReference>
<dbReference type="SUPFAM" id="SSF57184">
    <property type="entry name" value="Growth factor receptor domain"/>
    <property type="match status" value="1"/>
</dbReference>
<dbReference type="SUPFAM" id="SSF56112">
    <property type="entry name" value="Protein kinase-like (PK-like)"/>
    <property type="match status" value="1"/>
</dbReference>
<dbReference type="SUPFAM" id="SSF47769">
    <property type="entry name" value="SAM/Pointed domain"/>
    <property type="match status" value="1"/>
</dbReference>
<dbReference type="PROSITE" id="PS01186">
    <property type="entry name" value="EGF_2"/>
    <property type="match status" value="1"/>
</dbReference>
<dbReference type="PROSITE" id="PS51550">
    <property type="entry name" value="EPH_LBD"/>
    <property type="match status" value="1"/>
</dbReference>
<dbReference type="PROSITE" id="PS50853">
    <property type="entry name" value="FN3"/>
    <property type="match status" value="2"/>
</dbReference>
<dbReference type="PROSITE" id="PS00107">
    <property type="entry name" value="PROTEIN_KINASE_ATP"/>
    <property type="match status" value="1"/>
</dbReference>
<dbReference type="PROSITE" id="PS50011">
    <property type="entry name" value="PROTEIN_KINASE_DOM"/>
    <property type="match status" value="1"/>
</dbReference>
<dbReference type="PROSITE" id="PS00109">
    <property type="entry name" value="PROTEIN_KINASE_TYR"/>
    <property type="match status" value="1"/>
</dbReference>
<dbReference type="PROSITE" id="PS00790">
    <property type="entry name" value="RECEPTOR_TYR_KIN_V_1"/>
    <property type="match status" value="1"/>
</dbReference>
<dbReference type="PROSITE" id="PS00791">
    <property type="entry name" value="RECEPTOR_TYR_KIN_V_2"/>
    <property type="match status" value="1"/>
</dbReference>
<dbReference type="PROSITE" id="PS50105">
    <property type="entry name" value="SAM_DOMAIN"/>
    <property type="match status" value="1"/>
</dbReference>
<comment type="function">
    <text evidence="1">Receptor tyrosine kinase which binds promiscuously GPI-anchored ephrin-A family ligands residing on adjacent cells, leading to contact-dependent bidirectional signaling into neighboring cells. The signaling pathway downstream of the receptor is referred to as forward signaling while the signaling pathway downstream of the ephrin ligand is referred to as reverse signaling. Among GPI-anchored ephrin-A ligands, EFNA5 most probably constitutes the cognate/functional ligand for EPHA5. Functions as an axon guidance molecule during development and may be involved in the development of the retinotectal, entorhino-hippocampal and hippocamposeptal pathways. Together with EFNA5 plays also a role in synaptic plasticity in adult brain through regulation of synaptogenesis (By similarity).</text>
</comment>
<comment type="catalytic activity">
    <reaction evidence="9">
        <text>L-tyrosyl-[protein] + ATP = O-phospho-L-tyrosyl-[protein] + ADP + H(+)</text>
        <dbReference type="Rhea" id="RHEA:10596"/>
        <dbReference type="Rhea" id="RHEA-COMP:10136"/>
        <dbReference type="Rhea" id="RHEA-COMP:20101"/>
        <dbReference type="ChEBI" id="CHEBI:15378"/>
        <dbReference type="ChEBI" id="CHEBI:30616"/>
        <dbReference type="ChEBI" id="CHEBI:46858"/>
        <dbReference type="ChEBI" id="CHEBI:61978"/>
        <dbReference type="ChEBI" id="CHEBI:456216"/>
        <dbReference type="EC" id="2.7.10.1"/>
    </reaction>
</comment>
<comment type="subunit">
    <text evidence="1">Heterotetramer upon binding of the ligand. The heterotetramer is composed of an ephrin dimer and a receptor dimer. Oligomerization is probably required to induce biological responses (By similarity).</text>
</comment>
<comment type="subcellular location">
    <subcellularLocation>
        <location evidence="3">Cell membrane</location>
        <topology evidence="4">Single-pass type I membrane protein</topology>
    </subcellularLocation>
    <subcellularLocation>
        <location evidence="3">Cell projection</location>
        <location evidence="3">Axon</location>
    </subcellularLocation>
    <subcellularLocation>
        <location evidence="2">Cell projection</location>
        <location evidence="2">Dendrite</location>
    </subcellularLocation>
</comment>
<comment type="alternative products">
    <event type="alternative splicing"/>
    <isoform>
        <id>P54755-1</id>
        <name>3</name>
        <sequence type="displayed"/>
    </isoform>
    <isoform>
        <id>P54755-2</id>
        <name>1</name>
        <sequence type="described" ref="VSP_003005"/>
    </isoform>
    <isoform>
        <id>P54755-3</id>
        <name>2</name>
        <sequence type="described" ref="VSP_003004 VSP_003005"/>
    </isoform>
    <text>Additional isoforms seem to exist.</text>
</comment>
<comment type="tissue specificity">
    <text>Detected in the 10-day embryonic brain, weaker expression in the rest of the 10-day embryo. Undetected in adult tissues.</text>
</comment>
<comment type="PTM">
    <text evidence="1">Phosphorylated. Phosphorylation is stimulated by the ligand EFNA5 (By similarity).</text>
</comment>
<comment type="similarity">
    <text evidence="5">Belongs to the protein kinase superfamily. Tyr protein kinase family. Ephrin receptor subfamily.</text>
</comment>
<keyword id="KW-0025">Alternative splicing</keyword>
<keyword id="KW-0067">ATP-binding</keyword>
<keyword id="KW-1003">Cell membrane</keyword>
<keyword id="KW-0966">Cell projection</keyword>
<keyword id="KW-0325">Glycoprotein</keyword>
<keyword id="KW-0418">Kinase</keyword>
<keyword id="KW-0472">Membrane</keyword>
<keyword id="KW-0524">Neurogenesis</keyword>
<keyword id="KW-0547">Nucleotide-binding</keyword>
<keyword id="KW-0597">Phosphoprotein</keyword>
<keyword id="KW-0675">Receptor</keyword>
<keyword id="KW-1185">Reference proteome</keyword>
<keyword id="KW-0677">Repeat</keyword>
<keyword id="KW-0732">Signal</keyword>
<keyword id="KW-0808">Transferase</keyword>
<keyword id="KW-0812">Transmembrane</keyword>
<keyword id="KW-1133">Transmembrane helix</keyword>
<keyword id="KW-0829">Tyrosine-protein kinase</keyword>
<sequence length="1013" mass="112246">MGLRGGGGRAGGPAPGWTCLLLCAALRSLLASPGSEVNLLDSRTVMGDLGWIAYPKNGWEEIGEVDENYAPIHTYQVCKVMEQNQNNWLLTSWISNEGRPASSFELKFTLRDCNSLPGGLGTCKETFNMYYFESDDEDGRNIRENQYIKIDTIAADESFTELDLGDRVMKLNTEVRDVGPLTKKGFYLAFQDVGACIALVSVRVYYKKCPSVIRNLARFPDTITGADSSQLLEVSGVCVNHSVTDEAPKMHCSAEGEWLVPIGKCLCKAGYEEKNNTCQVCRPGFFKASPHSPSCSKCPPHSYTLDEASTSCLCEEHYFRRESDPPTMACTRPPSAPRSAISNVNETSVFLEWIPPADTGGRKDVSYYIACKKCNSHSGLCEACGSHVRYLPQQTGLKNTSVMMVDLLAHTNYTFEIEAVNGVSDQNPGARQFVSVNVTTNQAAPSPVSSVKKGKITKNSISLSWQEPDRPNGIILEYEIKYFEKDQETSYTIIKSKETAITADGLKPGSAYVFQIRARTAAGYGGFSRRFEFETSPVLAASSDQSQIPIIVVSVTVGVILLAVVIGFLLSGSCCDHGCGWASSLRAVAYPSLIWRCGYSKAKQDPEEEKMHFHNGHIKLPGVRTYIDPHTYEDPNQAVHEFAKEIEASCITIERVIGAGEFGEVCSGRLKLQGKREFPVAIKTLKVGYTEKQRRDFLGEASIMGQFDHPNIIHLEGVVTKSKPVMIVTEYMENGSLDTFLKKNDGQFTVIQLVGMLRGIASGMKYLSDMGYVHRDLAARNILINSNLVCKVSDFGLSRVLEDDPEAAYTTRGGKIPIRWTAPEAIAFRKFTSASDVWSYGIVMWEVMSYGERPYWEMTNQDVIKAVEEGYRLPSPMDCPAALYQLMLDCWQKDRNSRPKFDEIVSMLDKLIRNPSSLKTLVNASSRVSNLLVEHSPVGSGAYRSVGEWLEAIKMGRYTEIFMENGYSSMDSVAQVTLEDLRRLGVTLVGHQKKIMNSLQEMKVQLVNGMVPL</sequence>
<reference key="1">
    <citation type="journal article" date="1994" name="Gene">
        <title>Identification of a complete Cek7 receptor protein tyrosine kinase coding sequence and cDNAs of alternatively spliced transcripts.</title>
        <authorList>
            <person name="Siever D.A."/>
            <person name="Verderame M.F."/>
        </authorList>
    </citation>
    <scope>NUCLEOTIDE SEQUENCE [MRNA]</scope>
    <source>
        <tissue>Body wall</tissue>
    </source>
</reference>
<reference key="2">
    <citation type="journal article" date="1993" name="Oncogene">
        <title>Five novel avian Eph-related tyrosine kinases are differentially expressed.</title>
        <authorList>
            <person name="Sajjadi F.G."/>
            <person name="Pasquale E.B."/>
        </authorList>
    </citation>
    <scope>NUCLEOTIDE SEQUENCE [MRNA] OF 512-1013</scope>
    <source>
        <tissue>Brain</tissue>
    </source>
</reference>
<accession>P54755</accession>
<accession>Q07495</accession>
<evidence type="ECO:0000250" key="1"/>
<evidence type="ECO:0000250" key="2">
    <source>
        <dbReference type="UniProtKB" id="P54756"/>
    </source>
</evidence>
<evidence type="ECO:0000250" key="3">
    <source>
        <dbReference type="UniProtKB" id="P54757"/>
    </source>
</evidence>
<evidence type="ECO:0000255" key="4"/>
<evidence type="ECO:0000255" key="5">
    <source>
        <dbReference type="PROSITE-ProRule" id="PRU00159"/>
    </source>
</evidence>
<evidence type="ECO:0000255" key="6">
    <source>
        <dbReference type="PROSITE-ProRule" id="PRU00184"/>
    </source>
</evidence>
<evidence type="ECO:0000255" key="7">
    <source>
        <dbReference type="PROSITE-ProRule" id="PRU00316"/>
    </source>
</evidence>
<evidence type="ECO:0000255" key="8">
    <source>
        <dbReference type="PROSITE-ProRule" id="PRU00883"/>
    </source>
</evidence>
<evidence type="ECO:0000255" key="9">
    <source>
        <dbReference type="PROSITE-ProRule" id="PRU10028"/>
    </source>
</evidence>
<evidence type="ECO:0000305" key="10"/>